<gene>
    <name evidence="1" type="primary">miaA</name>
    <name type="ordered locus">MAE_03840</name>
</gene>
<evidence type="ECO:0000255" key="1">
    <source>
        <dbReference type="HAMAP-Rule" id="MF_00185"/>
    </source>
</evidence>
<organism>
    <name type="scientific">Microcystis aeruginosa (strain NIES-843 / IAM M-2473)</name>
    <dbReference type="NCBI Taxonomy" id="449447"/>
    <lineage>
        <taxon>Bacteria</taxon>
        <taxon>Bacillati</taxon>
        <taxon>Cyanobacteriota</taxon>
        <taxon>Cyanophyceae</taxon>
        <taxon>Oscillatoriophycideae</taxon>
        <taxon>Chroococcales</taxon>
        <taxon>Microcystaceae</taxon>
        <taxon>Microcystis</taxon>
    </lineage>
</organism>
<reference key="1">
    <citation type="journal article" date="2007" name="DNA Res.">
        <title>Complete genomic structure of the bloom-forming toxic cyanobacterium Microcystis aeruginosa NIES-843.</title>
        <authorList>
            <person name="Kaneko T."/>
            <person name="Nakajima N."/>
            <person name="Okamoto S."/>
            <person name="Suzuki I."/>
            <person name="Tanabe Y."/>
            <person name="Tamaoki M."/>
            <person name="Nakamura Y."/>
            <person name="Kasai F."/>
            <person name="Watanabe A."/>
            <person name="Kawashima K."/>
            <person name="Kishida Y."/>
            <person name="Ono A."/>
            <person name="Shimizu Y."/>
            <person name="Takahashi C."/>
            <person name="Minami C."/>
            <person name="Fujishiro T."/>
            <person name="Kohara M."/>
            <person name="Katoh M."/>
            <person name="Nakazaki N."/>
            <person name="Nakayama S."/>
            <person name="Yamada M."/>
            <person name="Tabata S."/>
            <person name="Watanabe M.M."/>
        </authorList>
    </citation>
    <scope>NUCLEOTIDE SEQUENCE [LARGE SCALE GENOMIC DNA]</scope>
    <source>
        <strain>NIES-843 / IAM M-247</strain>
    </source>
</reference>
<comment type="function">
    <text evidence="1">Catalyzes the transfer of a dimethylallyl group onto the adenine at position 37 in tRNAs that read codons beginning with uridine, leading to the formation of N6-(dimethylallyl)adenosine (i(6)A).</text>
</comment>
<comment type="catalytic activity">
    <reaction evidence="1">
        <text>adenosine(37) in tRNA + dimethylallyl diphosphate = N(6)-dimethylallyladenosine(37) in tRNA + diphosphate</text>
        <dbReference type="Rhea" id="RHEA:26482"/>
        <dbReference type="Rhea" id="RHEA-COMP:10162"/>
        <dbReference type="Rhea" id="RHEA-COMP:10375"/>
        <dbReference type="ChEBI" id="CHEBI:33019"/>
        <dbReference type="ChEBI" id="CHEBI:57623"/>
        <dbReference type="ChEBI" id="CHEBI:74411"/>
        <dbReference type="ChEBI" id="CHEBI:74415"/>
        <dbReference type="EC" id="2.5.1.75"/>
    </reaction>
</comment>
<comment type="cofactor">
    <cofactor evidence="1">
        <name>Mg(2+)</name>
        <dbReference type="ChEBI" id="CHEBI:18420"/>
    </cofactor>
</comment>
<comment type="subunit">
    <text evidence="1">Monomer.</text>
</comment>
<comment type="similarity">
    <text evidence="1">Belongs to the IPP transferase family.</text>
</comment>
<feature type="chain" id="PRO_1000191860" description="tRNA dimethylallyltransferase">
    <location>
        <begin position="1"/>
        <end position="315"/>
    </location>
</feature>
<feature type="region of interest" description="Interaction with substrate tRNA" evidence="1">
    <location>
        <begin position="39"/>
        <end position="42"/>
    </location>
</feature>
<feature type="binding site" evidence="1">
    <location>
        <begin position="14"/>
        <end position="21"/>
    </location>
    <ligand>
        <name>ATP</name>
        <dbReference type="ChEBI" id="CHEBI:30616"/>
    </ligand>
</feature>
<feature type="binding site" evidence="1">
    <location>
        <begin position="16"/>
        <end position="21"/>
    </location>
    <ligand>
        <name>substrate</name>
    </ligand>
</feature>
<feature type="site" description="Interaction with substrate tRNA" evidence="1">
    <location>
        <position position="103"/>
    </location>
</feature>
<keyword id="KW-0067">ATP-binding</keyword>
<keyword id="KW-0460">Magnesium</keyword>
<keyword id="KW-0547">Nucleotide-binding</keyword>
<keyword id="KW-0808">Transferase</keyword>
<keyword id="KW-0819">tRNA processing</keyword>
<protein>
    <recommendedName>
        <fullName evidence="1">tRNA dimethylallyltransferase</fullName>
        <ecNumber evidence="1">2.5.1.75</ecNumber>
    </recommendedName>
    <alternativeName>
        <fullName evidence="1">Dimethylallyl diphosphate:tRNA dimethylallyltransferase</fullName>
        <shortName evidence="1">DMAPP:tRNA dimethylallyltransferase</shortName>
        <shortName evidence="1">DMATase</shortName>
    </alternativeName>
    <alternativeName>
        <fullName evidence="1">Isopentenyl-diphosphate:tRNA isopentenyltransferase</fullName>
        <shortName evidence="1">IPP transferase</shortName>
        <shortName evidence="1">IPPT</shortName>
        <shortName evidence="1">IPTase</shortName>
    </alternativeName>
</protein>
<dbReference type="EC" id="2.5.1.75" evidence="1"/>
<dbReference type="EMBL" id="AP009552">
    <property type="protein sequence ID" value="BAG00206.1"/>
    <property type="molecule type" value="Genomic_DNA"/>
</dbReference>
<dbReference type="RefSeq" id="WP_012264058.1">
    <property type="nucleotide sequence ID" value="NC_010296.1"/>
</dbReference>
<dbReference type="SMR" id="B0JN42"/>
<dbReference type="STRING" id="449447.MAE_03840"/>
<dbReference type="PaxDb" id="449447-MAE_03840"/>
<dbReference type="EnsemblBacteria" id="BAG00206">
    <property type="protein sequence ID" value="BAG00206"/>
    <property type="gene ID" value="MAE_03840"/>
</dbReference>
<dbReference type="KEGG" id="mar:MAE_03840"/>
<dbReference type="PATRIC" id="fig|449447.4.peg.363"/>
<dbReference type="eggNOG" id="COG0324">
    <property type="taxonomic scope" value="Bacteria"/>
</dbReference>
<dbReference type="HOGENOM" id="CLU_032616_0_1_3"/>
<dbReference type="BioCyc" id="MAER449447:MAE_RS01755-MONOMER"/>
<dbReference type="Proteomes" id="UP000001510">
    <property type="component" value="Chromosome"/>
</dbReference>
<dbReference type="GO" id="GO:0005524">
    <property type="term" value="F:ATP binding"/>
    <property type="evidence" value="ECO:0007669"/>
    <property type="project" value="UniProtKB-UniRule"/>
</dbReference>
<dbReference type="GO" id="GO:0052381">
    <property type="term" value="F:tRNA dimethylallyltransferase activity"/>
    <property type="evidence" value="ECO:0007669"/>
    <property type="project" value="UniProtKB-UniRule"/>
</dbReference>
<dbReference type="GO" id="GO:0006400">
    <property type="term" value="P:tRNA modification"/>
    <property type="evidence" value="ECO:0007669"/>
    <property type="project" value="TreeGrafter"/>
</dbReference>
<dbReference type="Gene3D" id="1.10.20.140">
    <property type="match status" value="1"/>
</dbReference>
<dbReference type="Gene3D" id="3.40.50.300">
    <property type="entry name" value="P-loop containing nucleotide triphosphate hydrolases"/>
    <property type="match status" value="1"/>
</dbReference>
<dbReference type="HAMAP" id="MF_00185">
    <property type="entry name" value="IPP_trans"/>
    <property type="match status" value="1"/>
</dbReference>
<dbReference type="InterPro" id="IPR039657">
    <property type="entry name" value="Dimethylallyltransferase"/>
</dbReference>
<dbReference type="InterPro" id="IPR018022">
    <property type="entry name" value="IPT"/>
</dbReference>
<dbReference type="InterPro" id="IPR027417">
    <property type="entry name" value="P-loop_NTPase"/>
</dbReference>
<dbReference type="NCBIfam" id="TIGR00174">
    <property type="entry name" value="miaA"/>
    <property type="match status" value="1"/>
</dbReference>
<dbReference type="PANTHER" id="PTHR11088">
    <property type="entry name" value="TRNA DIMETHYLALLYLTRANSFERASE"/>
    <property type="match status" value="1"/>
</dbReference>
<dbReference type="PANTHER" id="PTHR11088:SF60">
    <property type="entry name" value="TRNA DIMETHYLALLYLTRANSFERASE"/>
    <property type="match status" value="1"/>
</dbReference>
<dbReference type="Pfam" id="PF01715">
    <property type="entry name" value="IPPT"/>
    <property type="match status" value="1"/>
</dbReference>
<dbReference type="SUPFAM" id="SSF52540">
    <property type="entry name" value="P-loop containing nucleoside triphosphate hydrolases"/>
    <property type="match status" value="2"/>
</dbReference>
<accession>B0JN42</accession>
<proteinExistence type="inferred from homology"/>
<sequence length="315" mass="35623">MTTSSLPILIVICGATATGKSSLALQLAEKFNSVILSADSRQIYREFNIGTAKPSLEECQRIPHYLIDICDPQDNFTLAQYQEQAEDLINNLHYSPLFLVGGTGLYIKSIVKGLKIPRVSPQADLRRQLQALGQSYLYQILTQVDEEAAKKIHPHDQVRTLRALEVFYLTGKPISSQQGENPPTYPILQIGLDCSPESLGKRITVRTDQMIARGLVAEVQNLGDKYGWDLPLLQTLGYAEIKQYLLGEISLEQAIDLIILHTRQFAKRQRTWFRADADIIWFPVDKENLLESVEREIILFLEGLSRPDIKTHHPD</sequence>
<name>MIAA_MICAN</name>